<organism>
    <name type="scientific">Mus musculus</name>
    <name type="common">Mouse</name>
    <dbReference type="NCBI Taxonomy" id="10090"/>
    <lineage>
        <taxon>Eukaryota</taxon>
        <taxon>Metazoa</taxon>
        <taxon>Chordata</taxon>
        <taxon>Craniata</taxon>
        <taxon>Vertebrata</taxon>
        <taxon>Euteleostomi</taxon>
        <taxon>Mammalia</taxon>
        <taxon>Eutheria</taxon>
        <taxon>Euarchontoglires</taxon>
        <taxon>Glires</taxon>
        <taxon>Rodentia</taxon>
        <taxon>Myomorpha</taxon>
        <taxon>Muroidea</taxon>
        <taxon>Muridae</taxon>
        <taxon>Murinae</taxon>
        <taxon>Mus</taxon>
        <taxon>Mus</taxon>
    </lineage>
</organism>
<sequence length="223" mass="25120">MSQTKTAKVRVTLFFILVGGVLAMVAVVTDHWAVLSPHLEHHNETCEAAHFGLWRICTARVAVHNKDKSCEHVTPSGEKNCSYFRHFNPGESSEIFEFTTQKEYSISAAAIAIFSLGFIIVGSICAFLSFGNKRDYLLRPASMFYAFAGLCLIVSVEVMRQSVKRMIDSEDTVWIEHYYSWSFACACAAFILLFLGGLFLLLFSLPRMPQNPWESCMDAEPEH</sequence>
<gene>
    <name type="primary">Cacng1</name>
</gene>
<comment type="function">
    <text evidence="3 4">Regulatory subunit of the voltage-gated calcium channel that gives rise to L-type calcium currents in skeletal muscle. Regulates channel inactivation kinetics.</text>
</comment>
<comment type="subunit">
    <text evidence="1 3 4">Component of a calcium channel complex consisting of a pore-forming alpha subunit (CACNA1S) and the ancillary subunits CACNB1 or CACNB2, CACNG1 and CACNA2D1 (PubMed:10799530, PubMed:12409298). The channel complex contains alpha, beta, gamma and delta subunits in a 1:1:1:1 ratio, i.e. it contains either CACNB1 or CACNB2 (By similarity).</text>
</comment>
<comment type="subcellular location">
    <subcellularLocation>
        <location evidence="7 8">Cell membrane</location>
        <location evidence="7 8">Sarcolemma</location>
        <topology evidence="1">Multi-pass membrane protein</topology>
    </subcellularLocation>
</comment>
<comment type="tissue specificity">
    <text evidence="3 5">Detected in skeletal muscle (at protein level).</text>
</comment>
<comment type="PTM">
    <text evidence="1">N-glycosylated.</text>
</comment>
<comment type="disruption phenotype">
    <text evidence="3">No visible phenotype.</text>
</comment>
<comment type="similarity">
    <text evidence="6">Belongs to the PMP-22/EMP/MP20 family. CACNG subfamily.</text>
</comment>
<evidence type="ECO:0000250" key="1">
    <source>
        <dbReference type="UniProtKB" id="P19518"/>
    </source>
</evidence>
<evidence type="ECO:0000255" key="2"/>
<evidence type="ECO:0000269" key="3">
    <source>
    </source>
</evidence>
<evidence type="ECO:0000269" key="4">
    <source>
    </source>
</evidence>
<evidence type="ECO:0000269" key="5">
    <source>
    </source>
</evidence>
<evidence type="ECO:0000305" key="6"/>
<evidence type="ECO:0000305" key="7">
    <source>
    </source>
</evidence>
<evidence type="ECO:0000305" key="8">
    <source>
    </source>
</evidence>
<accession>O70578</accession>
<feature type="chain" id="PRO_0000164670" description="Voltage-dependent calcium channel gamma-1 subunit">
    <location>
        <begin position="1"/>
        <end position="223"/>
    </location>
</feature>
<feature type="topological domain" description="Cytoplasmic" evidence="6">
    <location>
        <begin position="1"/>
        <end position="10"/>
    </location>
</feature>
<feature type="transmembrane region" description="Helical" evidence="1">
    <location>
        <begin position="11"/>
        <end position="29"/>
    </location>
</feature>
<feature type="topological domain" description="Extracellular" evidence="6">
    <location>
        <begin position="30"/>
        <end position="109"/>
    </location>
</feature>
<feature type="transmembrane region" description="Helical" evidence="1">
    <location>
        <begin position="110"/>
        <end position="130"/>
    </location>
</feature>
<feature type="topological domain" description="Cytoplasmic" evidence="6">
    <location>
        <begin position="131"/>
        <end position="135"/>
    </location>
</feature>
<feature type="transmembrane region" description="Helical" evidence="1">
    <location>
        <begin position="136"/>
        <end position="156"/>
    </location>
</feature>
<feature type="topological domain" description="Extracellular" evidence="6">
    <location>
        <begin position="157"/>
        <end position="180"/>
    </location>
</feature>
<feature type="transmembrane region" description="Helical" evidence="1">
    <location>
        <begin position="181"/>
        <end position="205"/>
    </location>
</feature>
<feature type="topological domain" description="Cytoplasmic" evidence="6">
    <location>
        <begin position="206"/>
        <end position="223"/>
    </location>
</feature>
<feature type="glycosylation site" description="N-linked (GlcNAc...) asparagine" evidence="2">
    <location>
        <position position="43"/>
    </location>
</feature>
<feature type="glycosylation site" description="N-linked (GlcNAc...) asparagine" evidence="2">
    <location>
        <position position="80"/>
    </location>
</feature>
<feature type="disulfide bond" evidence="1">
    <location>
        <begin position="57"/>
        <end position="81"/>
    </location>
</feature>
<protein>
    <recommendedName>
        <fullName>Voltage-dependent calcium channel gamma-1 subunit</fullName>
    </recommendedName>
    <alternativeName>
        <fullName>Dihydropyridine-sensitive L-type, skeletal muscle calcium channel subunit gamma</fullName>
    </alternativeName>
</protein>
<dbReference type="EMBL" id="AJ006306">
    <property type="protein sequence ID" value="CAA06966.1"/>
    <property type="molecule type" value="mRNA"/>
</dbReference>
<dbReference type="CCDS" id="CCDS25570.1"/>
<dbReference type="RefSeq" id="NP_031608.1">
    <property type="nucleotide sequence ID" value="NM_007582.2"/>
</dbReference>
<dbReference type="SMR" id="O70578"/>
<dbReference type="ComplexPortal" id="CPX-3191">
    <property type="entry name" value="Cav1.1 voltage-gated calcium channel complex, CACNA2D1-CACNB1-CACNG1 variant"/>
</dbReference>
<dbReference type="FunCoup" id="O70578">
    <property type="interactions" value="389"/>
</dbReference>
<dbReference type="STRING" id="10090.ENSMUSP00000021065"/>
<dbReference type="GlyCosmos" id="O70578">
    <property type="glycosylation" value="2 sites, No reported glycans"/>
</dbReference>
<dbReference type="GlyGen" id="O70578">
    <property type="glycosylation" value="2 sites"/>
</dbReference>
<dbReference type="PhosphoSitePlus" id="O70578"/>
<dbReference type="jPOST" id="O70578"/>
<dbReference type="PaxDb" id="10090-ENSMUSP00000021065"/>
<dbReference type="ProteomicsDB" id="265720"/>
<dbReference type="Antibodypedia" id="19201">
    <property type="antibodies" value="189 antibodies from 28 providers"/>
</dbReference>
<dbReference type="DNASU" id="12299"/>
<dbReference type="Ensembl" id="ENSMUST00000021065.6">
    <property type="protein sequence ID" value="ENSMUSP00000021065.6"/>
    <property type="gene ID" value="ENSMUSG00000020722.6"/>
</dbReference>
<dbReference type="GeneID" id="12299"/>
<dbReference type="KEGG" id="mmu:12299"/>
<dbReference type="UCSC" id="uc007may.1">
    <property type="organism name" value="mouse"/>
</dbReference>
<dbReference type="AGR" id="MGI:1206582"/>
<dbReference type="CTD" id="786"/>
<dbReference type="MGI" id="MGI:1206582">
    <property type="gene designation" value="Cacng1"/>
</dbReference>
<dbReference type="VEuPathDB" id="HostDB:ENSMUSG00000020722"/>
<dbReference type="eggNOG" id="ENOG502QT5N">
    <property type="taxonomic scope" value="Eukaryota"/>
</dbReference>
<dbReference type="GeneTree" id="ENSGT00390000007786"/>
<dbReference type="HOGENOM" id="CLU_093876_0_0_1"/>
<dbReference type="InParanoid" id="O70578"/>
<dbReference type="OMA" id="KRIVMTD"/>
<dbReference type="OrthoDB" id="9937541at2759"/>
<dbReference type="PhylomeDB" id="O70578"/>
<dbReference type="TreeFam" id="TF331651"/>
<dbReference type="BioGRID-ORCS" id="12299">
    <property type="hits" value="1 hit in 77 CRISPR screens"/>
</dbReference>
<dbReference type="PRO" id="PR:O70578"/>
<dbReference type="Proteomes" id="UP000000589">
    <property type="component" value="Chromosome 11"/>
</dbReference>
<dbReference type="RNAct" id="O70578">
    <property type="molecule type" value="protein"/>
</dbReference>
<dbReference type="Bgee" id="ENSMUSG00000020722">
    <property type="expression patterns" value="Expressed in hindlimb stylopod muscle and 64 other cell types or tissues"/>
</dbReference>
<dbReference type="ExpressionAtlas" id="O70578">
    <property type="expression patterns" value="baseline and differential"/>
</dbReference>
<dbReference type="GO" id="GO:1990454">
    <property type="term" value="C:L-type voltage-gated calcium channel complex"/>
    <property type="evidence" value="ECO:0000250"/>
    <property type="project" value="UniProtKB"/>
</dbReference>
<dbReference type="GO" id="GO:0005886">
    <property type="term" value="C:plasma membrane"/>
    <property type="evidence" value="ECO:0000250"/>
    <property type="project" value="UniProtKB"/>
</dbReference>
<dbReference type="GO" id="GO:0042383">
    <property type="term" value="C:sarcolemma"/>
    <property type="evidence" value="ECO:0000250"/>
    <property type="project" value="UniProtKB"/>
</dbReference>
<dbReference type="GO" id="GO:0030315">
    <property type="term" value="C:T-tubule"/>
    <property type="evidence" value="ECO:0000250"/>
    <property type="project" value="UniProtKB"/>
</dbReference>
<dbReference type="GO" id="GO:0005246">
    <property type="term" value="F:calcium channel regulator activity"/>
    <property type="evidence" value="ECO:0000250"/>
    <property type="project" value="UniProtKB"/>
</dbReference>
<dbReference type="GO" id="GO:0005245">
    <property type="term" value="F:voltage-gated calcium channel activity"/>
    <property type="evidence" value="ECO:0000315"/>
    <property type="project" value="MGI"/>
</dbReference>
<dbReference type="GO" id="GO:0070588">
    <property type="term" value="P:calcium ion transmembrane transport"/>
    <property type="evidence" value="ECO:0000315"/>
    <property type="project" value="MGI"/>
</dbReference>
<dbReference type="GO" id="GO:0051649">
    <property type="term" value="P:establishment of localization in cell"/>
    <property type="evidence" value="ECO:0000315"/>
    <property type="project" value="MGI"/>
</dbReference>
<dbReference type="GO" id="GO:0045933">
    <property type="term" value="P:positive regulation of muscle contraction"/>
    <property type="evidence" value="ECO:0000303"/>
    <property type="project" value="ComplexPortal"/>
</dbReference>
<dbReference type="GO" id="GO:1902514">
    <property type="term" value="P:regulation of calcium ion transmembrane transport via high voltage-gated calcium channel"/>
    <property type="evidence" value="ECO:0000250"/>
    <property type="project" value="UniProtKB"/>
</dbReference>
<dbReference type="GO" id="GO:0070296">
    <property type="term" value="P:sarcoplasmic reticulum calcium ion transport"/>
    <property type="evidence" value="ECO:0000315"/>
    <property type="project" value="MGI"/>
</dbReference>
<dbReference type="FunFam" id="1.20.140.150:FF:000031">
    <property type="entry name" value="Voltage-dependent calcium channel gamma-1 subunit"/>
    <property type="match status" value="1"/>
</dbReference>
<dbReference type="Gene3D" id="1.20.140.150">
    <property type="match status" value="1"/>
</dbReference>
<dbReference type="InterPro" id="IPR004031">
    <property type="entry name" value="PMP22/EMP/MP20/Claudin"/>
</dbReference>
<dbReference type="InterPro" id="IPR005421">
    <property type="entry name" value="VDCC_g1su"/>
</dbReference>
<dbReference type="InterPro" id="IPR008368">
    <property type="entry name" value="VDCC_gsu"/>
</dbReference>
<dbReference type="PANTHER" id="PTHR15025:SF1">
    <property type="entry name" value="VOLTAGE-DEPENDENT CALCIUM CHANNEL GAMMA-1 SUBUNIT"/>
    <property type="match status" value="1"/>
</dbReference>
<dbReference type="PANTHER" id="PTHR15025">
    <property type="entry name" value="VOLTAGE-DEPENDENT CALCIUM CHANNEL GAMMA-1 SUBUNIT-RELATED"/>
    <property type="match status" value="1"/>
</dbReference>
<dbReference type="Pfam" id="PF13903">
    <property type="entry name" value="Claudin_2"/>
    <property type="match status" value="1"/>
</dbReference>
<dbReference type="PRINTS" id="PR01792">
    <property type="entry name" value="VDCCGAMMA"/>
</dbReference>
<dbReference type="PRINTS" id="PR01601">
    <property type="entry name" value="VDCCGAMMA1"/>
</dbReference>
<proteinExistence type="evidence at protein level"/>
<reference key="1">
    <citation type="journal article" date="1998" name="Biol. Chem.">
        <title>The structure of the murine calcium channel gamma-subunit gene and protein.</title>
        <authorList>
            <person name="Wissenbach U."/>
            <person name="Bosse-Doenecke E."/>
            <person name="Freise D."/>
            <person name="Ludwig A."/>
            <person name="Murakami M."/>
            <person name="Hofmann F."/>
            <person name="Flockerzi V."/>
        </authorList>
    </citation>
    <scope>NUCLEOTIDE SEQUENCE [MRNA]</scope>
    <scope>TISSUE SPECIFICITY</scope>
    <scope>SUBCELLULAR LOCATION</scope>
    <source>
        <strain>129/SvJ</strain>
        <tissue>Skeletal muscle</tissue>
    </source>
</reference>
<reference key="2">
    <citation type="journal article" date="2000" name="J. Biol. Chem.">
        <title>Absence of the gamma subunit of the skeletal muscle dihydropyridine receptor increases L-type Ca2+ currents and alters channel inactivation properties.</title>
        <authorList>
            <person name="Freise D."/>
            <person name="Held B."/>
            <person name="Wissenbach U."/>
            <person name="Pfeifer A."/>
            <person name="Trost C."/>
            <person name="Himmerkus N."/>
            <person name="Schweig U."/>
            <person name="Freichel M."/>
            <person name="Biel M."/>
            <person name="Hofmann F."/>
            <person name="Hoth M."/>
            <person name="Flockerzi V."/>
        </authorList>
    </citation>
    <scope>FUNCTION</scope>
    <scope>DISRUPTION PHENOTYPE</scope>
    <scope>SUBCELLULAR LOCATION</scope>
    <scope>SUBUNIT</scope>
    <scope>TISSUE SPECIFICITY</scope>
</reference>
<reference key="3">
    <citation type="journal article" date="2003" name="J. Biol. Chem.">
        <title>Gamma 1 subunit interactions within the skeletal muscle L-type voltage-gated calcium channels.</title>
        <authorList>
            <person name="Arikkath J."/>
            <person name="Chen C.C."/>
            <person name="Ahern C."/>
            <person name="Allamand V."/>
            <person name="Flanagan J.D."/>
            <person name="Coronado R."/>
            <person name="Gregg R.G."/>
            <person name="Campbell K.P."/>
        </authorList>
    </citation>
    <scope>FUNCTION</scope>
    <scope>SUBUNIT</scope>
</reference>
<name>CCG1_MOUSE</name>
<keyword id="KW-0106">Calcium</keyword>
<keyword id="KW-0107">Calcium channel</keyword>
<keyword id="KW-0109">Calcium transport</keyword>
<keyword id="KW-1003">Cell membrane</keyword>
<keyword id="KW-1015">Disulfide bond</keyword>
<keyword id="KW-0325">Glycoprotein</keyword>
<keyword id="KW-0407">Ion channel</keyword>
<keyword id="KW-0406">Ion transport</keyword>
<keyword id="KW-0472">Membrane</keyword>
<keyword id="KW-1185">Reference proteome</keyword>
<keyword id="KW-0812">Transmembrane</keyword>
<keyword id="KW-1133">Transmembrane helix</keyword>
<keyword id="KW-0813">Transport</keyword>
<keyword id="KW-0851">Voltage-gated channel</keyword>